<gene>
    <name evidence="1" type="primary">nuoA</name>
    <name type="ordered locus">plu3089</name>
</gene>
<sequence length="149" mass="16472">MSMSTSTELFAHHWAFAVFLLGAFGLCALMLLGAFFLGGRAKARAKHVPYESGIDSVGSARLRMSAKFYLVAMFFVIFDVEALFLYAWSVSIKESGWLGFIEASIFILVLLAGLFYLVRIGALNWTPSRSSRQVSKPSVVININNSHPQ</sequence>
<keyword id="KW-0997">Cell inner membrane</keyword>
<keyword id="KW-1003">Cell membrane</keyword>
<keyword id="KW-0472">Membrane</keyword>
<keyword id="KW-0520">NAD</keyword>
<keyword id="KW-0874">Quinone</keyword>
<keyword id="KW-1185">Reference proteome</keyword>
<keyword id="KW-1278">Translocase</keyword>
<keyword id="KW-0812">Transmembrane</keyword>
<keyword id="KW-1133">Transmembrane helix</keyword>
<keyword id="KW-0813">Transport</keyword>
<keyword id="KW-0830">Ubiquinone</keyword>
<feature type="chain" id="PRO_0000362714" description="NADH-quinone oxidoreductase subunit A">
    <location>
        <begin position="1"/>
        <end position="149"/>
    </location>
</feature>
<feature type="transmembrane region" description="Helical" evidence="1">
    <location>
        <begin position="16"/>
        <end position="36"/>
    </location>
</feature>
<feature type="transmembrane region" description="Helical" evidence="1">
    <location>
        <begin position="68"/>
        <end position="88"/>
    </location>
</feature>
<feature type="transmembrane region" description="Helical" evidence="1">
    <location>
        <begin position="98"/>
        <end position="118"/>
    </location>
</feature>
<accession>Q7N2I7</accession>
<proteinExistence type="inferred from homology"/>
<evidence type="ECO:0000255" key="1">
    <source>
        <dbReference type="HAMAP-Rule" id="MF_01394"/>
    </source>
</evidence>
<dbReference type="EC" id="7.1.1.-" evidence="1"/>
<dbReference type="EMBL" id="BX571869">
    <property type="protein sequence ID" value="CAE15463.1"/>
    <property type="molecule type" value="Genomic_DNA"/>
</dbReference>
<dbReference type="RefSeq" id="WP_011147306.1">
    <property type="nucleotide sequence ID" value="NC_005126.1"/>
</dbReference>
<dbReference type="SMR" id="Q7N2I7"/>
<dbReference type="STRING" id="243265.plu3089"/>
<dbReference type="GeneID" id="88804695"/>
<dbReference type="KEGG" id="plu:plu3089"/>
<dbReference type="eggNOG" id="COG0838">
    <property type="taxonomic scope" value="Bacteria"/>
</dbReference>
<dbReference type="HOGENOM" id="CLU_119549_2_1_6"/>
<dbReference type="Proteomes" id="UP000002514">
    <property type="component" value="Chromosome"/>
</dbReference>
<dbReference type="GO" id="GO:0030964">
    <property type="term" value="C:NADH dehydrogenase complex"/>
    <property type="evidence" value="ECO:0007669"/>
    <property type="project" value="TreeGrafter"/>
</dbReference>
<dbReference type="GO" id="GO:0005886">
    <property type="term" value="C:plasma membrane"/>
    <property type="evidence" value="ECO:0007669"/>
    <property type="project" value="UniProtKB-SubCell"/>
</dbReference>
<dbReference type="GO" id="GO:0008137">
    <property type="term" value="F:NADH dehydrogenase (ubiquinone) activity"/>
    <property type="evidence" value="ECO:0007669"/>
    <property type="project" value="InterPro"/>
</dbReference>
<dbReference type="GO" id="GO:0050136">
    <property type="term" value="F:NADH:ubiquinone reductase (non-electrogenic) activity"/>
    <property type="evidence" value="ECO:0007669"/>
    <property type="project" value="UniProtKB-UniRule"/>
</dbReference>
<dbReference type="GO" id="GO:0048038">
    <property type="term" value="F:quinone binding"/>
    <property type="evidence" value="ECO:0007669"/>
    <property type="project" value="UniProtKB-KW"/>
</dbReference>
<dbReference type="FunFam" id="1.20.58.1610:FF:000003">
    <property type="entry name" value="NADH-quinone oxidoreductase subunit A"/>
    <property type="match status" value="1"/>
</dbReference>
<dbReference type="Gene3D" id="1.20.58.1610">
    <property type="entry name" value="NADH:ubiquinone/plastoquinone oxidoreductase, chain 3"/>
    <property type="match status" value="1"/>
</dbReference>
<dbReference type="HAMAP" id="MF_01394">
    <property type="entry name" value="NDH1_NuoA"/>
    <property type="match status" value="1"/>
</dbReference>
<dbReference type="InterPro" id="IPR023043">
    <property type="entry name" value="NAD(P)H_OxRDtase_bac/plastid"/>
</dbReference>
<dbReference type="InterPro" id="IPR000440">
    <property type="entry name" value="NADH_UbQ/plastoQ_OxRdtase_su3"/>
</dbReference>
<dbReference type="InterPro" id="IPR038430">
    <property type="entry name" value="NDAH_ubi_oxred_su3_sf"/>
</dbReference>
<dbReference type="PANTHER" id="PTHR11058:SF21">
    <property type="entry name" value="NADH-QUINONE OXIDOREDUCTASE SUBUNIT A"/>
    <property type="match status" value="1"/>
</dbReference>
<dbReference type="PANTHER" id="PTHR11058">
    <property type="entry name" value="NADH-UBIQUINONE OXIDOREDUCTASE CHAIN 3"/>
    <property type="match status" value="1"/>
</dbReference>
<dbReference type="Pfam" id="PF00507">
    <property type="entry name" value="Oxidored_q4"/>
    <property type="match status" value="1"/>
</dbReference>
<comment type="function">
    <text evidence="1">NDH-1 shuttles electrons from NADH, via FMN and iron-sulfur (Fe-S) centers, to quinones in the respiratory chain. The immediate electron acceptor for the enzyme in this species is believed to be ubiquinone. Couples the redox reaction to proton translocation (for every two electrons transferred, four hydrogen ions are translocated across the cytoplasmic membrane), and thus conserves the redox energy in a proton gradient.</text>
</comment>
<comment type="catalytic activity">
    <reaction evidence="1">
        <text>a quinone + NADH + 5 H(+)(in) = a quinol + NAD(+) + 4 H(+)(out)</text>
        <dbReference type="Rhea" id="RHEA:57888"/>
        <dbReference type="ChEBI" id="CHEBI:15378"/>
        <dbReference type="ChEBI" id="CHEBI:24646"/>
        <dbReference type="ChEBI" id="CHEBI:57540"/>
        <dbReference type="ChEBI" id="CHEBI:57945"/>
        <dbReference type="ChEBI" id="CHEBI:132124"/>
    </reaction>
</comment>
<comment type="subunit">
    <text evidence="1">NDH-1 is composed of 13 different subunits. Subunits NuoA, H, J, K, L, M, N constitute the membrane sector of the complex.</text>
</comment>
<comment type="subcellular location">
    <subcellularLocation>
        <location evidence="1">Cell inner membrane</location>
        <topology evidence="1">Multi-pass membrane protein</topology>
    </subcellularLocation>
</comment>
<comment type="similarity">
    <text evidence="1">Belongs to the complex I subunit 3 family.</text>
</comment>
<name>NUOA_PHOLL</name>
<protein>
    <recommendedName>
        <fullName evidence="1">NADH-quinone oxidoreductase subunit A</fullName>
        <ecNumber evidence="1">7.1.1.-</ecNumber>
    </recommendedName>
    <alternativeName>
        <fullName evidence="1">NADH dehydrogenase I subunit A</fullName>
    </alternativeName>
    <alternativeName>
        <fullName evidence="1">NDH-1 subunit A</fullName>
    </alternativeName>
    <alternativeName>
        <fullName evidence="1">NUO1</fullName>
    </alternativeName>
</protein>
<organism>
    <name type="scientific">Photorhabdus laumondii subsp. laumondii (strain DSM 15139 / CIP 105565 / TT01)</name>
    <name type="common">Photorhabdus luminescens subsp. laumondii</name>
    <dbReference type="NCBI Taxonomy" id="243265"/>
    <lineage>
        <taxon>Bacteria</taxon>
        <taxon>Pseudomonadati</taxon>
        <taxon>Pseudomonadota</taxon>
        <taxon>Gammaproteobacteria</taxon>
        <taxon>Enterobacterales</taxon>
        <taxon>Morganellaceae</taxon>
        <taxon>Photorhabdus</taxon>
    </lineage>
</organism>
<reference key="1">
    <citation type="journal article" date="2003" name="Nat. Biotechnol.">
        <title>The genome sequence of the entomopathogenic bacterium Photorhabdus luminescens.</title>
        <authorList>
            <person name="Duchaud E."/>
            <person name="Rusniok C."/>
            <person name="Frangeul L."/>
            <person name="Buchrieser C."/>
            <person name="Givaudan A."/>
            <person name="Taourit S."/>
            <person name="Bocs S."/>
            <person name="Boursaux-Eude C."/>
            <person name="Chandler M."/>
            <person name="Charles J.-F."/>
            <person name="Dassa E."/>
            <person name="Derose R."/>
            <person name="Derzelle S."/>
            <person name="Freyssinet G."/>
            <person name="Gaudriault S."/>
            <person name="Medigue C."/>
            <person name="Lanois A."/>
            <person name="Powell K."/>
            <person name="Siguier P."/>
            <person name="Vincent R."/>
            <person name="Wingate V."/>
            <person name="Zouine M."/>
            <person name="Glaser P."/>
            <person name="Boemare N."/>
            <person name="Danchin A."/>
            <person name="Kunst F."/>
        </authorList>
    </citation>
    <scope>NUCLEOTIDE SEQUENCE [LARGE SCALE GENOMIC DNA]</scope>
    <source>
        <strain>DSM 15139 / CIP 105565 / TT01</strain>
    </source>
</reference>